<gene>
    <name type="primary">Gtpbp4</name>
    <name type="synonym">Crfg</name>
    <name type="synonym">Nog1</name>
</gene>
<protein>
    <recommendedName>
        <fullName>GTP-binding protein 4</fullName>
    </recommendedName>
    <alternativeName>
        <fullName>Chronic renal failure gene protein</fullName>
    </alternativeName>
    <alternativeName>
        <fullName>Nucleolar GTP-binding protein 1</fullName>
    </alternativeName>
</protein>
<organism>
    <name type="scientific">Rattus norvegicus</name>
    <name type="common">Rat</name>
    <dbReference type="NCBI Taxonomy" id="10116"/>
    <lineage>
        <taxon>Eukaryota</taxon>
        <taxon>Metazoa</taxon>
        <taxon>Chordata</taxon>
        <taxon>Craniata</taxon>
        <taxon>Vertebrata</taxon>
        <taxon>Euteleostomi</taxon>
        <taxon>Mammalia</taxon>
        <taxon>Eutheria</taxon>
        <taxon>Euarchontoglires</taxon>
        <taxon>Glires</taxon>
        <taxon>Rodentia</taxon>
        <taxon>Myomorpha</taxon>
        <taxon>Muroidea</taxon>
        <taxon>Muridae</taxon>
        <taxon>Murinae</taxon>
        <taxon>Rattus</taxon>
    </lineage>
</organism>
<comment type="function">
    <text evidence="1">Involved in the biogenesis of the 60S ribosomal subunit. Acts as TP53 repressor, preventing TP53 stabilization and cell cycle arrest.</text>
</comment>
<comment type="subunit">
    <text evidence="1">Associates with pre-60S ribosomal particles. Interacts with MINAS-60 (product of an alternative open reading frame of RBM10).</text>
</comment>
<comment type="subcellular location">
    <subcellularLocation>
        <location evidence="1">Nucleus</location>
        <location evidence="1">Nucleolus</location>
    </subcellularLocation>
</comment>
<comment type="similarity">
    <text evidence="2">Belongs to the TRAFAC class OBG-HflX-like GTPase superfamily. OBG GTPase family. NOG subfamily.</text>
</comment>
<proteinExistence type="evidence at transcript level"/>
<keyword id="KW-0007">Acetylation</keyword>
<keyword id="KW-0342">GTP-binding</keyword>
<keyword id="KW-1017">Isopeptide bond</keyword>
<keyword id="KW-0547">Nucleotide-binding</keyword>
<keyword id="KW-0539">Nucleus</keyword>
<keyword id="KW-0597">Phosphoprotein</keyword>
<keyword id="KW-1185">Reference proteome</keyword>
<keyword id="KW-0690">Ribosome biogenesis</keyword>
<keyword id="KW-0832">Ubl conjugation</keyword>
<reference key="1">
    <citation type="journal article" date="2001" name="J. Am. Soc. Nephrol.">
        <title>Identification of a novel nuclear guanosine triphosphate-binding protein differentially expressed in renal disease.</title>
        <authorList>
            <person name="Laping N.J."/>
            <person name="Olson B.A."/>
            <person name="Zhu Y."/>
        </authorList>
    </citation>
    <scope>NUCLEOTIDE SEQUENCE [MRNA]</scope>
    <source>
        <strain>Sprague-Dawley</strain>
        <tissue>Kidney</tissue>
    </source>
</reference>
<dbReference type="EMBL" id="AF325355">
    <property type="protein sequence ID" value="AAK13446.1"/>
    <property type="molecule type" value="mRNA"/>
</dbReference>
<dbReference type="SMR" id="Q99P77"/>
<dbReference type="FunCoup" id="Q99P77">
    <property type="interactions" value="3777"/>
</dbReference>
<dbReference type="IntAct" id="Q99P77">
    <property type="interactions" value="1"/>
</dbReference>
<dbReference type="STRING" id="10116.ENSRNOP00000064860"/>
<dbReference type="PhosphoSitePlus" id="Q99P77"/>
<dbReference type="jPOST" id="Q99P77"/>
<dbReference type="PaxDb" id="10116-ENSRNOP00000064860"/>
<dbReference type="UCSC" id="RGD:620783">
    <property type="organism name" value="rat"/>
</dbReference>
<dbReference type="AGR" id="RGD:620783"/>
<dbReference type="RGD" id="620783">
    <property type="gene designation" value="Gtpbp4"/>
</dbReference>
<dbReference type="eggNOG" id="KOG1490">
    <property type="taxonomic scope" value="Eukaryota"/>
</dbReference>
<dbReference type="InParanoid" id="Q99P77"/>
<dbReference type="PhylomeDB" id="Q99P77"/>
<dbReference type="PRO" id="PR:Q99P77"/>
<dbReference type="Proteomes" id="UP000002494">
    <property type="component" value="Unplaced"/>
</dbReference>
<dbReference type="GO" id="GO:0005737">
    <property type="term" value="C:cytoplasm"/>
    <property type="evidence" value="ECO:0000250"/>
    <property type="project" value="HGNC-UCL"/>
</dbReference>
<dbReference type="GO" id="GO:0005730">
    <property type="term" value="C:nucleolus"/>
    <property type="evidence" value="ECO:0000318"/>
    <property type="project" value="GO_Central"/>
</dbReference>
<dbReference type="GO" id="GO:0005634">
    <property type="term" value="C:nucleus"/>
    <property type="evidence" value="ECO:0000250"/>
    <property type="project" value="HGNC-UCL"/>
</dbReference>
<dbReference type="GO" id="GO:0048471">
    <property type="term" value="C:perinuclear region of cytoplasm"/>
    <property type="evidence" value="ECO:0000250"/>
    <property type="project" value="HGNC-UCL"/>
</dbReference>
<dbReference type="GO" id="GO:0005525">
    <property type="term" value="F:GTP binding"/>
    <property type="evidence" value="ECO:0000250"/>
    <property type="project" value="HGNC-UCL"/>
</dbReference>
<dbReference type="GO" id="GO:0003924">
    <property type="term" value="F:GTPase activity"/>
    <property type="evidence" value="ECO:0000250"/>
    <property type="project" value="HGNC-UCL"/>
</dbReference>
<dbReference type="GO" id="GO:1990275">
    <property type="term" value="F:preribosome binding"/>
    <property type="evidence" value="ECO:0000250"/>
    <property type="project" value="UniProtKB"/>
</dbReference>
<dbReference type="GO" id="GO:0003723">
    <property type="term" value="F:RNA binding"/>
    <property type="evidence" value="ECO:0000318"/>
    <property type="project" value="GO_Central"/>
</dbReference>
<dbReference type="GO" id="GO:0000463">
    <property type="term" value="P:maturation of LSU-rRNA from tricistronic rRNA transcript (SSU-rRNA, 5.8S rRNA, LSU-rRNA)"/>
    <property type="evidence" value="ECO:0000266"/>
    <property type="project" value="RGD"/>
</dbReference>
<dbReference type="GO" id="GO:0030336">
    <property type="term" value="P:negative regulation of cell migration"/>
    <property type="evidence" value="ECO:0000250"/>
    <property type="project" value="HGNC-UCL"/>
</dbReference>
<dbReference type="GO" id="GO:0008285">
    <property type="term" value="P:negative regulation of cell population proliferation"/>
    <property type="evidence" value="ECO:0000250"/>
    <property type="project" value="HGNC-UCL"/>
</dbReference>
<dbReference type="GO" id="GO:0022408">
    <property type="term" value="P:negative regulation of cell-cell adhesion"/>
    <property type="evidence" value="ECO:0000250"/>
    <property type="project" value="HGNC-UCL"/>
</dbReference>
<dbReference type="GO" id="GO:0008156">
    <property type="term" value="P:negative regulation of DNA replication"/>
    <property type="evidence" value="ECO:0000250"/>
    <property type="project" value="HGNC-UCL"/>
</dbReference>
<dbReference type="GO" id="GO:0010972">
    <property type="term" value="P:negative regulation of G2/M transition of mitotic cell cycle"/>
    <property type="evidence" value="ECO:0000250"/>
    <property type="project" value="HGNC-UCL"/>
</dbReference>
<dbReference type="GO" id="GO:0031397">
    <property type="term" value="P:negative regulation of protein ubiquitination"/>
    <property type="evidence" value="ECO:0000250"/>
    <property type="project" value="HGNC-UCL"/>
</dbReference>
<dbReference type="GO" id="GO:0050821">
    <property type="term" value="P:protein stabilization"/>
    <property type="evidence" value="ECO:0000250"/>
    <property type="project" value="HGNC-UCL"/>
</dbReference>
<dbReference type="GO" id="GO:0042273">
    <property type="term" value="P:ribosomal large subunit biogenesis"/>
    <property type="evidence" value="ECO:0000250"/>
    <property type="project" value="UniProtKB"/>
</dbReference>
<dbReference type="CDD" id="cd01897">
    <property type="entry name" value="NOG"/>
    <property type="match status" value="1"/>
</dbReference>
<dbReference type="FunFam" id="1.20.120.1190:FF:000001">
    <property type="entry name" value="Nucleolar GTP-binding protein 1"/>
    <property type="match status" value="1"/>
</dbReference>
<dbReference type="FunFam" id="3.40.50.300:FF:000496">
    <property type="entry name" value="Nucleolar GTP-binding protein 1"/>
    <property type="match status" value="1"/>
</dbReference>
<dbReference type="Gene3D" id="1.20.120.1190">
    <property type="match status" value="1"/>
</dbReference>
<dbReference type="Gene3D" id="3.40.50.300">
    <property type="entry name" value="P-loop containing nucleotide triphosphate hydrolases"/>
    <property type="match status" value="1"/>
</dbReference>
<dbReference type="InterPro" id="IPR031167">
    <property type="entry name" value="G_OBG"/>
</dbReference>
<dbReference type="InterPro" id="IPR006073">
    <property type="entry name" value="GTP-bd"/>
</dbReference>
<dbReference type="InterPro" id="IPR024926">
    <property type="entry name" value="NOG1"/>
</dbReference>
<dbReference type="InterPro" id="IPR041623">
    <property type="entry name" value="NOG1_N"/>
</dbReference>
<dbReference type="InterPro" id="IPR010674">
    <property type="entry name" value="NOG1_Rossman_fold_dom"/>
</dbReference>
<dbReference type="InterPro" id="IPR012973">
    <property type="entry name" value="NOG_C"/>
</dbReference>
<dbReference type="InterPro" id="IPR027417">
    <property type="entry name" value="P-loop_NTPase"/>
</dbReference>
<dbReference type="PANTHER" id="PTHR45759">
    <property type="entry name" value="NUCLEOLAR GTP-BINDING PROTEIN 1"/>
    <property type="match status" value="1"/>
</dbReference>
<dbReference type="Pfam" id="PF06858">
    <property type="entry name" value="NOG1"/>
    <property type="match status" value="1"/>
</dbReference>
<dbReference type="Pfam" id="PF17835">
    <property type="entry name" value="NOG1_N"/>
    <property type="match status" value="1"/>
</dbReference>
<dbReference type="Pfam" id="PF08155">
    <property type="entry name" value="NOGCT"/>
    <property type="match status" value="1"/>
</dbReference>
<dbReference type="PIRSF" id="PIRSF038919">
    <property type="entry name" value="NOG1"/>
    <property type="match status" value="1"/>
</dbReference>
<dbReference type="PRINTS" id="PR00326">
    <property type="entry name" value="GTP1OBG"/>
</dbReference>
<dbReference type="SUPFAM" id="SSF52540">
    <property type="entry name" value="P-loop containing nucleoside triphosphate hydrolases"/>
    <property type="match status" value="1"/>
</dbReference>
<dbReference type="PROSITE" id="PS51710">
    <property type="entry name" value="G_OBG"/>
    <property type="match status" value="1"/>
</dbReference>
<evidence type="ECO:0000250" key="1">
    <source>
        <dbReference type="UniProtKB" id="Q9BZE4"/>
    </source>
</evidence>
<evidence type="ECO:0000255" key="2">
    <source>
        <dbReference type="PROSITE-ProRule" id="PRU01047"/>
    </source>
</evidence>
<evidence type="ECO:0000256" key="3">
    <source>
        <dbReference type="SAM" id="MobiDB-lite"/>
    </source>
</evidence>
<feature type="initiator methionine" description="Removed" evidence="1">
    <location>
        <position position="1"/>
    </location>
</feature>
<feature type="chain" id="PRO_0000195025" description="GTP-binding protein 4">
    <location>
        <begin position="2"/>
        <end position="637"/>
    </location>
</feature>
<feature type="domain" description="OBG-type G" evidence="2">
    <location>
        <begin position="169"/>
        <end position="340"/>
    </location>
</feature>
<feature type="region of interest" description="Disordered" evidence="3">
    <location>
        <begin position="499"/>
        <end position="518"/>
    </location>
</feature>
<feature type="region of interest" description="Disordered" evidence="3">
    <location>
        <begin position="525"/>
        <end position="637"/>
    </location>
</feature>
<feature type="compositionally biased region" description="Basic residues" evidence="3">
    <location>
        <begin position="542"/>
        <end position="555"/>
    </location>
</feature>
<feature type="compositionally biased region" description="Low complexity" evidence="3">
    <location>
        <begin position="563"/>
        <end position="574"/>
    </location>
</feature>
<feature type="compositionally biased region" description="Basic and acidic residues" evidence="3">
    <location>
        <begin position="576"/>
        <end position="588"/>
    </location>
</feature>
<feature type="compositionally biased region" description="Basic residues" evidence="3">
    <location>
        <begin position="589"/>
        <end position="607"/>
    </location>
</feature>
<feature type="compositionally biased region" description="Basic and acidic residues" evidence="3">
    <location>
        <begin position="608"/>
        <end position="621"/>
    </location>
</feature>
<feature type="compositionally biased region" description="Basic residues" evidence="3">
    <location>
        <begin position="622"/>
        <end position="637"/>
    </location>
</feature>
<feature type="binding site" evidence="2">
    <location>
        <begin position="175"/>
        <end position="182"/>
    </location>
    <ligand>
        <name>GTP</name>
        <dbReference type="ChEBI" id="CHEBI:37565"/>
    </ligand>
</feature>
<feature type="binding site" evidence="2">
    <location>
        <begin position="221"/>
        <end position="225"/>
    </location>
    <ligand>
        <name>GTP</name>
        <dbReference type="ChEBI" id="CHEBI:37565"/>
    </ligand>
</feature>
<feature type="binding site" evidence="2">
    <location>
        <begin position="289"/>
        <end position="292"/>
    </location>
    <ligand>
        <name>GTP</name>
        <dbReference type="ChEBI" id="CHEBI:37565"/>
    </ligand>
</feature>
<feature type="modified residue" description="N-acetylalanine" evidence="1">
    <location>
        <position position="2"/>
    </location>
</feature>
<feature type="modified residue" description="N6-acetyllysine; alternate" evidence="1">
    <location>
        <position position="103"/>
    </location>
</feature>
<feature type="modified residue" description="Phosphoserine" evidence="1">
    <location>
        <position position="122"/>
    </location>
</feature>
<feature type="modified residue" description="Phosphoserine" evidence="1">
    <location>
        <position position="559"/>
    </location>
</feature>
<feature type="cross-link" description="Glycyl lysine isopeptide (Lys-Gly) (interchain with G-Cter in SUMO2); alternate" evidence="1">
    <location>
        <position position="103"/>
    </location>
</feature>
<feature type="cross-link" description="Glycyl lysine isopeptide (Lys-Gly) (interchain with G-Cter in SUMO2)" evidence="1">
    <location>
        <position position="332"/>
    </location>
</feature>
<feature type="cross-link" description="Glycyl lysine isopeptide (Lys-Gly) (interchain with G-Cter in SUMO2)" evidence="1">
    <location>
        <position position="535"/>
    </location>
</feature>
<accession>Q99P77</accession>
<sequence length="637" mass="74288">MAHYNFKKITVVPSAKDFIDLTLSKTQRKTPTVIHKHYQIHRIRHFYMRKVKFTQQNYHDRLSQILSDFPKLDDIHPFYADLMNILYDKDHYKLALGQINIAKNLVDNVAKDYVRLMKYGDSLYRCKQLKRAALGRMCTIIKRQRQSLEYLEQVRQHLSRLPTIDPNTRTLLLCGYPNVGKSSFINKVTRADVDVQPYAFTTKSLFVGHVDYKYLRWQVVDTPGILDHPLEDRNTIEMQAITALAHLRAAVLYVMDLSEQCGHGLKEQLGLFQNIRPLFINKPLIVVASKCEVKRIAELSEEDQKIFLDLQAEGFPVIETSTLTEEGVIQVKTEACDRLLAHRVETKMKGNKVNEVLNRLHLAVPNKRDDKERPPFIPEGVVARRKRMEIAEPKKKRERDLELEMGDDYILDLQKYWDLMNSSEKYDKIPEIWEGHNAADYIDPAIMKKLEELEKGKKSSEQLLGSMPVSLRVKTRKWWKIRQLAKQIREKKKLKILQSKEKNTQGPRMPRTAKKVQRADLENEMRSLGVDMDDKDNAHYAVRARRSRSVTRKRKREESVPPSSIARSRSRSCSKTPRDVSGLRDVKMVKKAKTMMKKAQKKMNRLGKKGEADRHVFDMKPKHLLSGKRKAGKKERR</sequence>
<name>GTPB4_RAT</name>